<reference key="1">
    <citation type="submission" date="2008-06" db="EMBL/GenBank/DDBJ databases">
        <title>Complete sequence of Chlorobium phaeobacteroides BS1.</title>
        <authorList>
            <consortium name="US DOE Joint Genome Institute"/>
            <person name="Lucas S."/>
            <person name="Copeland A."/>
            <person name="Lapidus A."/>
            <person name="Glavina del Rio T."/>
            <person name="Dalin E."/>
            <person name="Tice H."/>
            <person name="Bruce D."/>
            <person name="Goodwin L."/>
            <person name="Pitluck S."/>
            <person name="Schmutz J."/>
            <person name="Larimer F."/>
            <person name="Land M."/>
            <person name="Hauser L."/>
            <person name="Kyrpides N."/>
            <person name="Ovchinnikova G."/>
            <person name="Li T."/>
            <person name="Liu Z."/>
            <person name="Zhao F."/>
            <person name="Overmann J."/>
            <person name="Bryant D.A."/>
            <person name="Richardson P."/>
        </authorList>
    </citation>
    <scope>NUCLEOTIDE SEQUENCE [LARGE SCALE GENOMIC DNA]</scope>
    <source>
        <strain>BS1</strain>
    </source>
</reference>
<comment type="similarity">
    <text evidence="1">Belongs to the CinA family.</text>
</comment>
<accession>B3EL42</accession>
<sequence>MFAEIISIGDELLTGQKVNTNAGFICSELAGAGIPVQRIIACADNVDAIQEQFRESLERAMLVIVTGGLGPTRDDMTKQSAQQFLNRELVVDRQTYERTLDRYKLLGKKPVSSLCENAMVIGDSVVVQNDEGLAPGMIIACEERFQGHYLVLLPGVPREMKSMMRNSVLPYFSGLCGTVIVHSHIKTTGIGEASLAKIIVEIENTLPDGTSLAYLPHTAGVSLRVSSVGTDRSSVEHDNREITDAIVSAARHFVYATSDISLEELVGSLLLKEGVTIATAESCTGGLIAGRLTDVPGSSGYFEQGFVVYSNASKEKNLGVRRETIETCGAVSEEVAAEMAEGCLQRSGVHMAVSSTGIAGPDGGTELKPAGMVCLGLAIRKEGEGVRTETETFVTRGDRLQNKLRFSEAALRMVWKALRS</sequence>
<evidence type="ECO:0000255" key="1">
    <source>
        <dbReference type="HAMAP-Rule" id="MF_00226"/>
    </source>
</evidence>
<name>CINAL_CHLPB</name>
<proteinExistence type="inferred from homology"/>
<feature type="chain" id="PRO_1000100309" description="CinA-like protein">
    <location>
        <begin position="1"/>
        <end position="420"/>
    </location>
</feature>
<dbReference type="EMBL" id="CP001101">
    <property type="protein sequence ID" value="ACE03269.1"/>
    <property type="molecule type" value="Genomic_DNA"/>
</dbReference>
<dbReference type="SMR" id="B3EL42"/>
<dbReference type="STRING" id="331678.Cphamn1_0300"/>
<dbReference type="KEGG" id="cpb:Cphamn1_0300"/>
<dbReference type="eggNOG" id="COG1058">
    <property type="taxonomic scope" value="Bacteria"/>
</dbReference>
<dbReference type="eggNOG" id="COG1546">
    <property type="taxonomic scope" value="Bacteria"/>
</dbReference>
<dbReference type="HOGENOM" id="CLU_030805_9_3_10"/>
<dbReference type="OrthoDB" id="9801454at2"/>
<dbReference type="CDD" id="cd00885">
    <property type="entry name" value="cinA"/>
    <property type="match status" value="1"/>
</dbReference>
<dbReference type="Gene3D" id="3.90.950.20">
    <property type="entry name" value="CinA-like"/>
    <property type="match status" value="1"/>
</dbReference>
<dbReference type="Gene3D" id="3.40.980.10">
    <property type="entry name" value="MoaB/Mog-like domain"/>
    <property type="match status" value="1"/>
</dbReference>
<dbReference type="HAMAP" id="MF_00226_B">
    <property type="entry name" value="CinA_B"/>
    <property type="match status" value="1"/>
</dbReference>
<dbReference type="InterPro" id="IPR050101">
    <property type="entry name" value="CinA"/>
</dbReference>
<dbReference type="InterPro" id="IPR036653">
    <property type="entry name" value="CinA-like_C"/>
</dbReference>
<dbReference type="InterPro" id="IPR008136">
    <property type="entry name" value="CinA_C"/>
</dbReference>
<dbReference type="InterPro" id="IPR041424">
    <property type="entry name" value="CinA_KH"/>
</dbReference>
<dbReference type="InterPro" id="IPR008135">
    <property type="entry name" value="Competence-induced_CinA"/>
</dbReference>
<dbReference type="InterPro" id="IPR036425">
    <property type="entry name" value="MoaB/Mog-like_dom_sf"/>
</dbReference>
<dbReference type="InterPro" id="IPR001453">
    <property type="entry name" value="MoaB/Mog_dom"/>
</dbReference>
<dbReference type="NCBIfam" id="TIGR00200">
    <property type="entry name" value="cinA_nterm"/>
    <property type="match status" value="1"/>
</dbReference>
<dbReference type="NCBIfam" id="TIGR00199">
    <property type="entry name" value="PncC_domain"/>
    <property type="match status" value="1"/>
</dbReference>
<dbReference type="NCBIfam" id="NF001813">
    <property type="entry name" value="PRK00549.1"/>
    <property type="match status" value="1"/>
</dbReference>
<dbReference type="PANTHER" id="PTHR13939">
    <property type="entry name" value="NICOTINAMIDE-NUCLEOTIDE AMIDOHYDROLASE PNCC"/>
    <property type="match status" value="1"/>
</dbReference>
<dbReference type="PANTHER" id="PTHR13939:SF0">
    <property type="entry name" value="NMN AMIDOHYDROLASE-LIKE PROTEIN YFAY"/>
    <property type="match status" value="1"/>
</dbReference>
<dbReference type="Pfam" id="PF02464">
    <property type="entry name" value="CinA"/>
    <property type="match status" value="1"/>
</dbReference>
<dbReference type="Pfam" id="PF18146">
    <property type="entry name" value="CinA_KH"/>
    <property type="match status" value="1"/>
</dbReference>
<dbReference type="Pfam" id="PF00994">
    <property type="entry name" value="MoCF_biosynth"/>
    <property type="match status" value="1"/>
</dbReference>
<dbReference type="PIRSF" id="PIRSF006728">
    <property type="entry name" value="CinA"/>
    <property type="match status" value="1"/>
</dbReference>
<dbReference type="SMART" id="SM00852">
    <property type="entry name" value="MoCF_biosynth"/>
    <property type="match status" value="1"/>
</dbReference>
<dbReference type="SUPFAM" id="SSF142433">
    <property type="entry name" value="CinA-like"/>
    <property type="match status" value="1"/>
</dbReference>
<dbReference type="SUPFAM" id="SSF53218">
    <property type="entry name" value="Molybdenum cofactor biosynthesis proteins"/>
    <property type="match status" value="1"/>
</dbReference>
<gene>
    <name type="ordered locus">Cphamn1_0300</name>
</gene>
<protein>
    <recommendedName>
        <fullName evidence="1">CinA-like protein</fullName>
    </recommendedName>
</protein>
<organism>
    <name type="scientific">Chlorobium phaeobacteroides (strain BS1)</name>
    <dbReference type="NCBI Taxonomy" id="331678"/>
    <lineage>
        <taxon>Bacteria</taxon>
        <taxon>Pseudomonadati</taxon>
        <taxon>Chlorobiota</taxon>
        <taxon>Chlorobiia</taxon>
        <taxon>Chlorobiales</taxon>
        <taxon>Chlorobiaceae</taxon>
        <taxon>Chlorobium/Pelodictyon group</taxon>
        <taxon>Chlorobium</taxon>
    </lineage>
</organism>